<proteinExistence type="evidence at protein level"/>
<accession>Q19020</accession>
<organism>
    <name type="scientific">Caenorhabditis elegans</name>
    <dbReference type="NCBI Taxonomy" id="6239"/>
    <lineage>
        <taxon>Eukaryota</taxon>
        <taxon>Metazoa</taxon>
        <taxon>Ecdysozoa</taxon>
        <taxon>Nematoda</taxon>
        <taxon>Chromadorea</taxon>
        <taxon>Rhabditida</taxon>
        <taxon>Rhabditina</taxon>
        <taxon>Rhabditomorpha</taxon>
        <taxon>Rhabditoidea</taxon>
        <taxon>Rhabditidae</taxon>
        <taxon>Peloderinae</taxon>
        <taxon>Caenorhabditis</taxon>
    </lineage>
</organism>
<keyword id="KW-0067">ATP-binding</keyword>
<keyword id="KW-0175">Coiled coil</keyword>
<keyword id="KW-0963">Cytoplasm</keyword>
<keyword id="KW-0206">Cytoskeleton</keyword>
<keyword id="KW-0243">Dynein</keyword>
<keyword id="KW-0493">Microtubule</keyword>
<keyword id="KW-0505">Motor protein</keyword>
<keyword id="KW-0524">Neurogenesis</keyword>
<keyword id="KW-0547">Nucleotide-binding</keyword>
<keyword id="KW-1185">Reference proteome</keyword>
<keyword id="KW-0677">Repeat</keyword>
<keyword id="KW-0813">Transport</keyword>
<evidence type="ECO:0000250" key="1"/>
<evidence type="ECO:0000250" key="2">
    <source>
        <dbReference type="UniProtKB" id="P36022"/>
    </source>
</evidence>
<evidence type="ECO:0000255" key="3"/>
<evidence type="ECO:0000269" key="4">
    <source>
    </source>
</evidence>
<evidence type="ECO:0000269" key="5">
    <source>
    </source>
</evidence>
<evidence type="ECO:0000269" key="6">
    <source>
    </source>
</evidence>
<evidence type="ECO:0000269" key="7">
    <source>
    </source>
</evidence>
<evidence type="ECO:0000269" key="8">
    <source>
    </source>
</evidence>
<evidence type="ECO:0000269" key="9">
    <source>
    </source>
</evidence>
<evidence type="ECO:0000269" key="10">
    <source>
    </source>
</evidence>
<evidence type="ECO:0000269" key="11">
    <source>
    </source>
</evidence>
<evidence type="ECO:0000269" key="12">
    <source>
    </source>
</evidence>
<evidence type="ECO:0000269" key="13">
    <source>
    </source>
</evidence>
<evidence type="ECO:0000305" key="14"/>
<evidence type="ECO:0000312" key="15">
    <source>
        <dbReference type="WormBase" id="T21E12.4a"/>
    </source>
</evidence>
<reference key="1">
    <citation type="journal article" date="1995" name="Cell Motil. Cytoskeleton">
        <title>Genomic structure of a cytoplasmic dynein heavy chain gene from the nematode Caenorhabditis elegans.</title>
        <authorList>
            <person name="Lye R.J."/>
            <person name="Wilson R.K."/>
            <person name="Waterston R.H."/>
        </authorList>
    </citation>
    <scope>NUCLEOTIDE SEQUENCE [GENOMIC DNA]</scope>
    <source>
        <strain>Bristol N2</strain>
    </source>
</reference>
<reference key="2">
    <citation type="journal article" date="1998" name="Science">
        <title>Genome sequence of the nematode C. elegans: a platform for investigating biology.</title>
        <authorList>
            <consortium name="The C. elegans sequencing consortium"/>
        </authorList>
    </citation>
    <scope>NUCLEOTIDE SEQUENCE [LARGE SCALE GENOMIC DNA]</scope>
    <source>
        <strain>Bristol N2</strain>
    </source>
</reference>
<reference key="3">
    <citation type="journal article" date="2006" name="Brain Res.">
        <title>Genetic interactions among cortical malformation genes that influence susceptibility to convulsions in C. elegans.</title>
        <authorList>
            <person name="Locke C.J."/>
            <person name="Williams S.N."/>
            <person name="Schwarz E.M."/>
            <person name="Caldwell G.A."/>
            <person name="Caldwell K.A."/>
        </authorList>
    </citation>
    <scope>FUNCTION</scope>
    <scope>DISRUPTION PHENOTYPE</scope>
</reference>
<reference key="4">
    <citation type="journal article" date="2010" name="Cell">
        <title>Two cyclin-dependent kinase pathways are essential for polarized trafficking of presynaptic components.</title>
        <authorList>
            <person name="Ou C.Y."/>
            <person name="Poon V.Y."/>
            <person name="Maeder C.I."/>
            <person name="Watanabe S."/>
            <person name="Lehrman E.K."/>
            <person name="Fu A.K."/>
            <person name="Park M."/>
            <person name="Fu W.Y."/>
            <person name="Jorgensen E.M."/>
            <person name="Ip N.Y."/>
            <person name="Shen K."/>
        </authorList>
    </citation>
    <scope>FUNCTION</scope>
    <scope>MUTAGENESIS OF LEU-1398</scope>
</reference>
<reference key="5">
    <citation type="journal article" date="2010" name="Dev. Biol.">
        <title>UNC-83 coordinates kinesin-1 and dynein activities at the nuclear envelope during nuclear migration.</title>
        <authorList>
            <person name="Fridolfsson H.N."/>
            <person name="Ly N."/>
            <person name="Meyerzon M."/>
            <person name="Starr D.A."/>
        </authorList>
    </citation>
    <scope>FUNCTION</scope>
    <scope>DISRUPTION PHENOTYPE</scope>
</reference>
<reference key="6">
    <citation type="journal article" date="2010" name="Dev. Biol.">
        <title>The PAM-1 aminopeptidase regulates centrosome positioning to ensure anterior-posterior axis specification in one-cell C. elegans embryos.</title>
        <authorList>
            <person name="Fortin S.M."/>
            <person name="Marshall S.L."/>
            <person name="Jaeger E.C."/>
            <person name="Greene P.E."/>
            <person name="Brady L.K."/>
            <person name="Isaac R.E."/>
            <person name="Schrandt J.C."/>
            <person name="Brooks D.R."/>
            <person name="Lyczak R."/>
        </authorList>
    </citation>
    <scope>DISRUPTION PHENOTYPE</scope>
</reference>
<reference key="7">
    <citation type="journal article" date="2011" name="Development">
        <title>C. elegans bicd-1, homolog of the Drosophila dynein accessory factor Bicaudal D, regulates the branching of PVD sensory neuron dendrites.</title>
        <authorList>
            <person name="Aguirre-Chen C."/>
            <person name="Buelow H.E."/>
            <person name="Kaprielian Z."/>
        </authorList>
    </citation>
    <scope>FUNCTION</scope>
</reference>
<reference key="8">
    <citation type="journal article" date="2011" name="Neuron">
        <title>CYY-1/cyclin Y and CDK-5 differentially regulate synapse elimination and formation for rewiring neural circuits.</title>
        <authorList>
            <person name="Park M."/>
            <person name="Watanabe S."/>
            <person name="Poon V.Y."/>
            <person name="Ou C.Y."/>
            <person name="Jorgensen E.M."/>
            <person name="Shen K."/>
        </authorList>
    </citation>
    <scope>FUNCTION</scope>
</reference>
<reference key="9">
    <citation type="journal article" date="2012" name="J. Neurosci.">
        <title>Cyclin-dependent kinase 5 regulates the polarized trafficking of neuropeptide-containing dense-core vesicles in Caenorhabditis elegans motor neurons.</title>
        <authorList>
            <person name="Goodwin P.R."/>
            <person name="Sasaki J.M."/>
            <person name="Juo P."/>
        </authorList>
    </citation>
    <scope>FUNCTION</scope>
</reference>
<reference key="10">
    <citation type="journal article" date="2015" name="J. Cell Biol.">
        <title>Spindle assembly checkpoint proteins regulate and monitor meiotic synapsis in C. elegans.</title>
        <authorList>
            <person name="Bohr T."/>
            <person name="Nelson C.R."/>
            <person name="Klee E."/>
            <person name="Bhalla N."/>
        </authorList>
    </citation>
    <scope>FUNCTION</scope>
</reference>
<reference key="11">
    <citation type="journal article" date="2016" name="Development">
        <title>Nuclei migrate through constricted spaces using microtubule motors and actin networks in C. elegans hypodermal cells.</title>
        <authorList>
            <person name="Bone C.R."/>
            <person name="Chang Y.T."/>
            <person name="Cain N.E."/>
            <person name="Murphy S.P."/>
            <person name="Starr D.A."/>
        </authorList>
    </citation>
    <scope>FUNCTION</scope>
</reference>
<reference key="12">
    <citation type="journal article" date="2016" name="Development">
        <title>Dynein light chain DLC-1 promotes localization and function of the PUF protein FBF-2 in germline progenitor cells.</title>
        <authorList>
            <person name="Wang X."/>
            <person name="Olson J.R."/>
            <person name="Rasoloson D."/>
            <person name="Ellenbecker M."/>
            <person name="Bailey J."/>
            <person name="Voronina E."/>
        </authorList>
    </citation>
    <scope>DISRUPTION PHENOTYPE</scope>
</reference>
<feature type="chain" id="PRO_0000114634" description="Dynein heavy chain, cytoplasmic">
    <location>
        <begin position="1"/>
        <end position="4568"/>
    </location>
</feature>
<feature type="region of interest" description="Stem" evidence="1">
    <location>
        <begin position="1"/>
        <end position="1826"/>
    </location>
</feature>
<feature type="region of interest" description="AAA 1" evidence="1">
    <location>
        <begin position="1827"/>
        <end position="2049"/>
    </location>
</feature>
<feature type="region of interest" description="AAA 2" evidence="1">
    <location>
        <begin position="2118"/>
        <end position="2394"/>
    </location>
</feature>
<feature type="region of interest" description="AAA 3" evidence="1">
    <location>
        <begin position="2498"/>
        <end position="2747"/>
    </location>
</feature>
<feature type="region of interest" description="AAA 4" evidence="1">
    <location>
        <begin position="2842"/>
        <end position="3111"/>
    </location>
</feature>
<feature type="region of interest" description="Stalk" evidence="1">
    <location>
        <begin position="3132"/>
        <end position="3432"/>
    </location>
</feature>
<feature type="region of interest" description="AAA 5" evidence="1">
    <location>
        <begin position="3496"/>
        <end position="3725"/>
    </location>
</feature>
<feature type="region of interest" description="AAA 6" evidence="1">
    <location>
        <begin position="3954"/>
        <end position="4169"/>
    </location>
</feature>
<feature type="coiled-coil region" evidence="3">
    <location>
        <begin position="587"/>
        <end position="652"/>
    </location>
</feature>
<feature type="coiled-coil region" evidence="3">
    <location>
        <begin position="814"/>
        <end position="844"/>
    </location>
</feature>
<feature type="coiled-coil region" evidence="3">
    <location>
        <begin position="1241"/>
        <end position="1274"/>
    </location>
</feature>
<feature type="coiled-coil region" evidence="3">
    <location>
        <begin position="1324"/>
        <end position="1340"/>
    </location>
</feature>
<feature type="coiled-coil region" evidence="3">
    <location>
        <begin position="1559"/>
        <end position="1591"/>
    </location>
</feature>
<feature type="coiled-coil region" evidence="3">
    <location>
        <begin position="3132"/>
        <end position="3229"/>
    </location>
</feature>
<feature type="coiled-coil region" evidence="3">
    <location>
        <begin position="3339"/>
        <end position="3432"/>
    </location>
</feature>
<feature type="coiled-coil region" evidence="3">
    <location>
        <begin position="3707"/>
        <end position="3739"/>
    </location>
</feature>
<feature type="coiled-coil region" evidence="3">
    <location>
        <begin position="4359"/>
        <end position="4386"/>
    </location>
</feature>
<feature type="binding site" evidence="3">
    <location>
        <begin position="1865"/>
        <end position="1872"/>
    </location>
    <ligand>
        <name>ATP</name>
        <dbReference type="ChEBI" id="CHEBI:30616"/>
    </ligand>
</feature>
<feature type="binding site" evidence="3">
    <location>
        <begin position="2163"/>
        <end position="2170"/>
    </location>
    <ligand>
        <name>ATP</name>
        <dbReference type="ChEBI" id="CHEBI:30616"/>
    </ligand>
</feature>
<feature type="binding site" evidence="3">
    <location>
        <begin position="2537"/>
        <end position="2544"/>
    </location>
    <ligand>
        <name>ATP</name>
        <dbReference type="ChEBI" id="CHEBI:30616"/>
    </ligand>
</feature>
<feature type="binding site" evidence="3">
    <location>
        <begin position="2880"/>
        <end position="2887"/>
    </location>
    <ligand>
        <name>ATP</name>
        <dbReference type="ChEBI" id="CHEBI:30616"/>
    </ligand>
</feature>
<feature type="mutagenesis site" description="In wy622; mislocalization of synaptic vesicles to the dendrites is rescued in cdk-5 mutants." evidence="6">
    <original>L</original>
    <variation>F</variation>
    <location>
        <position position="1398"/>
    </location>
</feature>
<protein>
    <recommendedName>
        <fullName>Dynein heavy chain, cytoplasmic</fullName>
    </recommendedName>
    <alternativeName>
        <fullName>Dynein heavy chain, cytosolic</fullName>
        <shortName>DYHC</shortName>
    </alternativeName>
</protein>
<dbReference type="EMBL" id="L33260">
    <property type="protein sequence ID" value="AAC37251.1"/>
    <property type="molecule type" value="Genomic_DNA"/>
</dbReference>
<dbReference type="EMBL" id="BX284601">
    <property type="protein sequence ID" value="CCD64267.1"/>
    <property type="molecule type" value="Genomic_DNA"/>
</dbReference>
<dbReference type="PIR" id="D87755">
    <property type="entry name" value="D87755"/>
</dbReference>
<dbReference type="RefSeq" id="NP_491363.1">
    <property type="nucleotide sequence ID" value="NM_058962.7"/>
</dbReference>
<dbReference type="SMR" id="Q19020"/>
<dbReference type="BioGRID" id="37511">
    <property type="interactions" value="79"/>
</dbReference>
<dbReference type="FunCoup" id="Q19020">
    <property type="interactions" value="2437"/>
</dbReference>
<dbReference type="STRING" id="6239.T21E12.4a.2"/>
<dbReference type="iPTMnet" id="Q19020"/>
<dbReference type="PaxDb" id="6239-T21E12.4"/>
<dbReference type="PeptideAtlas" id="Q19020"/>
<dbReference type="EnsemblMetazoa" id="T21E12.4a.1">
    <property type="protein sequence ID" value="T21E12.4a.1"/>
    <property type="gene ID" value="WBGene00000962"/>
</dbReference>
<dbReference type="GeneID" id="172041"/>
<dbReference type="KEGG" id="cel:CELE_T21E12.4"/>
<dbReference type="UCSC" id="T21E12.4">
    <property type="organism name" value="c. elegans"/>
</dbReference>
<dbReference type="AGR" id="WB:WBGene00000962"/>
<dbReference type="CTD" id="172041"/>
<dbReference type="WormBase" id="T21E12.4a">
    <property type="protein sequence ID" value="CE23997"/>
    <property type="gene ID" value="WBGene00000962"/>
    <property type="gene designation" value="dhc-1"/>
</dbReference>
<dbReference type="eggNOG" id="KOG3595">
    <property type="taxonomic scope" value="Eukaryota"/>
</dbReference>
<dbReference type="GeneTree" id="ENSGT00940000156103"/>
<dbReference type="HOGENOM" id="CLU_000038_7_0_1"/>
<dbReference type="InParanoid" id="Q19020"/>
<dbReference type="OMA" id="NERQMTR"/>
<dbReference type="OrthoDB" id="14187at2759"/>
<dbReference type="PhylomeDB" id="Q19020"/>
<dbReference type="Reactome" id="R-CEL-6798695">
    <property type="pathway name" value="Neutrophil degranulation"/>
</dbReference>
<dbReference type="Reactome" id="R-CEL-6807878">
    <property type="pathway name" value="COPI-mediated anterograde transport"/>
</dbReference>
<dbReference type="Reactome" id="R-CEL-6811436">
    <property type="pathway name" value="COPI-independent Golgi-to-ER retrograde traffic"/>
</dbReference>
<dbReference type="Reactome" id="R-CEL-9646399">
    <property type="pathway name" value="Aggrephagy"/>
</dbReference>
<dbReference type="PRO" id="PR:Q19020"/>
<dbReference type="Proteomes" id="UP000001940">
    <property type="component" value="Chromosome I"/>
</dbReference>
<dbReference type="Bgee" id="WBGene00000962">
    <property type="expression patterns" value="Expressed in germ line (C elegans) and 4 other cell types or tissues"/>
</dbReference>
<dbReference type="ExpressionAtlas" id="Q19020">
    <property type="expression patterns" value="baseline and differential"/>
</dbReference>
<dbReference type="GO" id="GO:1904115">
    <property type="term" value="C:axon cytoplasm"/>
    <property type="evidence" value="ECO:0007669"/>
    <property type="project" value="GOC"/>
</dbReference>
<dbReference type="GO" id="GO:0005938">
    <property type="term" value="C:cell cortex"/>
    <property type="evidence" value="ECO:0000314"/>
    <property type="project" value="WormBase"/>
</dbReference>
<dbReference type="GO" id="GO:0005737">
    <property type="term" value="C:cytoplasm"/>
    <property type="evidence" value="ECO:0000314"/>
    <property type="project" value="WormBase"/>
</dbReference>
<dbReference type="GO" id="GO:0005868">
    <property type="term" value="C:cytoplasmic dynein complex"/>
    <property type="evidence" value="ECO:0000318"/>
    <property type="project" value="GO_Central"/>
</dbReference>
<dbReference type="GO" id="GO:0005881">
    <property type="term" value="C:cytoplasmic microtubule"/>
    <property type="evidence" value="ECO:0000318"/>
    <property type="project" value="GO_Central"/>
</dbReference>
<dbReference type="GO" id="GO:0000776">
    <property type="term" value="C:kinetochore"/>
    <property type="evidence" value="ECO:0000314"/>
    <property type="project" value="UniProtKB"/>
</dbReference>
<dbReference type="GO" id="GO:0005635">
    <property type="term" value="C:nuclear envelope"/>
    <property type="evidence" value="ECO:0000314"/>
    <property type="project" value="WormBase"/>
</dbReference>
<dbReference type="GO" id="GO:0005819">
    <property type="term" value="C:spindle"/>
    <property type="evidence" value="ECO:0000314"/>
    <property type="project" value="WormBase"/>
</dbReference>
<dbReference type="GO" id="GO:0000922">
    <property type="term" value="C:spindle pole"/>
    <property type="evidence" value="ECO:0000314"/>
    <property type="project" value="WormBase"/>
</dbReference>
<dbReference type="GO" id="GO:0045202">
    <property type="term" value="C:synapse"/>
    <property type="evidence" value="ECO:0007669"/>
    <property type="project" value="GOC"/>
</dbReference>
<dbReference type="GO" id="GO:0005524">
    <property type="term" value="F:ATP binding"/>
    <property type="evidence" value="ECO:0007669"/>
    <property type="project" value="UniProtKB-KW"/>
</dbReference>
<dbReference type="GO" id="GO:0016887">
    <property type="term" value="F:ATP hydrolysis activity"/>
    <property type="evidence" value="ECO:0007669"/>
    <property type="project" value="InterPro"/>
</dbReference>
<dbReference type="GO" id="GO:0045505">
    <property type="term" value="F:dynein intermediate chain binding"/>
    <property type="evidence" value="ECO:0000318"/>
    <property type="project" value="GO_Central"/>
</dbReference>
<dbReference type="GO" id="GO:0051959">
    <property type="term" value="F:dynein light intermediate chain binding"/>
    <property type="evidence" value="ECO:0000318"/>
    <property type="project" value="GO_Central"/>
</dbReference>
<dbReference type="GO" id="GO:0008569">
    <property type="term" value="F:minus-end-directed microtubule motor activity"/>
    <property type="evidence" value="ECO:0000318"/>
    <property type="project" value="GO_Central"/>
</dbReference>
<dbReference type="GO" id="GO:1990048">
    <property type="term" value="P:anterograde neuronal dense core vesicle transport"/>
    <property type="evidence" value="ECO:0000315"/>
    <property type="project" value="UniProtKB"/>
</dbReference>
<dbReference type="GO" id="GO:0031122">
    <property type="term" value="P:cytoplasmic microtubule organization"/>
    <property type="evidence" value="ECO:0000318"/>
    <property type="project" value="GO_Central"/>
</dbReference>
<dbReference type="GO" id="GO:0051296">
    <property type="term" value="P:establishment of meiotic spindle orientation"/>
    <property type="evidence" value="ECO:0000315"/>
    <property type="project" value="WormBase"/>
</dbReference>
<dbReference type="GO" id="GO:0051293">
    <property type="term" value="P:establishment of spindle localization"/>
    <property type="evidence" value="ECO:0000315"/>
    <property type="project" value="CACAO"/>
</dbReference>
<dbReference type="GO" id="GO:0051661">
    <property type="term" value="P:maintenance of centrosome location"/>
    <property type="evidence" value="ECO:0000315"/>
    <property type="project" value="UniProtKB"/>
</dbReference>
<dbReference type="GO" id="GO:0007052">
    <property type="term" value="P:mitotic spindle organization"/>
    <property type="evidence" value="ECO:0000318"/>
    <property type="project" value="GO_Central"/>
</dbReference>
<dbReference type="GO" id="GO:0016322">
    <property type="term" value="P:neuron remodeling"/>
    <property type="evidence" value="ECO:0000315"/>
    <property type="project" value="UniProtKB"/>
</dbReference>
<dbReference type="GO" id="GO:0007097">
    <property type="term" value="P:nuclear migration"/>
    <property type="evidence" value="ECO:0000318"/>
    <property type="project" value="GO_Central"/>
</dbReference>
<dbReference type="GO" id="GO:1904811">
    <property type="term" value="P:positive regulation of dense core granule transport"/>
    <property type="evidence" value="ECO:0000315"/>
    <property type="project" value="UniProtKB"/>
</dbReference>
<dbReference type="GO" id="GO:0048814">
    <property type="term" value="P:regulation of dendrite morphogenesis"/>
    <property type="evidence" value="ECO:0000315"/>
    <property type="project" value="WormBase"/>
</dbReference>
<dbReference type="GO" id="GO:1902473">
    <property type="term" value="P:regulation of protein localization to synapse"/>
    <property type="evidence" value="ECO:0000315"/>
    <property type="project" value="UniProtKB"/>
</dbReference>
<dbReference type="GO" id="GO:0008090">
    <property type="term" value="P:retrograde axonal transport"/>
    <property type="evidence" value="ECO:0000315"/>
    <property type="project" value="WormBase"/>
</dbReference>
<dbReference type="GO" id="GO:0051932">
    <property type="term" value="P:synaptic transmission, GABAergic"/>
    <property type="evidence" value="ECO:0000315"/>
    <property type="project" value="WormBase"/>
</dbReference>
<dbReference type="GO" id="GO:0048489">
    <property type="term" value="P:synaptic vesicle transport"/>
    <property type="evidence" value="ECO:0000315"/>
    <property type="project" value="WormBase"/>
</dbReference>
<dbReference type="CDD" id="cd00009">
    <property type="entry name" value="AAA"/>
    <property type="match status" value="2"/>
</dbReference>
<dbReference type="FunFam" id="1.20.920.20:FF:000002">
    <property type="entry name" value="Cytoplasmic dynein 1 heavy chain"/>
    <property type="match status" value="1"/>
</dbReference>
<dbReference type="FunFam" id="3.40.50.300:FF:000122">
    <property type="entry name" value="Cytoplasmic dynein 1 heavy chain"/>
    <property type="match status" value="1"/>
</dbReference>
<dbReference type="FunFam" id="1.10.287.2620:FF:000001">
    <property type="entry name" value="Cytoplasmic dynein heavy chain 1"/>
    <property type="match status" value="1"/>
</dbReference>
<dbReference type="FunFam" id="1.10.472.130:FF:000002">
    <property type="entry name" value="Cytoplasmic dynein heavy chain 1"/>
    <property type="match status" value="1"/>
</dbReference>
<dbReference type="FunFam" id="1.10.8.710:FF:000005">
    <property type="entry name" value="Cytoplasmic dynein heavy chain 1"/>
    <property type="match status" value="1"/>
</dbReference>
<dbReference type="FunFam" id="1.20.140.100:FF:000002">
    <property type="entry name" value="Cytoplasmic dynein heavy chain 1"/>
    <property type="match status" value="1"/>
</dbReference>
<dbReference type="FunFam" id="1.20.920.30:FF:000001">
    <property type="entry name" value="Cytoplasmic dynein heavy chain 1"/>
    <property type="match status" value="1"/>
</dbReference>
<dbReference type="FunFam" id="3.20.180.20:FF:000002">
    <property type="entry name" value="Cytoplasmic dynein heavy chain 1"/>
    <property type="match status" value="1"/>
</dbReference>
<dbReference type="FunFam" id="3.40.50.300:FF:000071">
    <property type="entry name" value="Cytoplasmic dynein heavy chain 1"/>
    <property type="match status" value="1"/>
</dbReference>
<dbReference type="FunFam" id="3.40.50.300:FF:000517">
    <property type="entry name" value="Cytoplasmic dynein heavy chain 1"/>
    <property type="match status" value="1"/>
</dbReference>
<dbReference type="FunFam" id="1.10.8.1220:FF:000007">
    <property type="entry name" value="Cytoplasmic dynein heavy chain 2"/>
    <property type="match status" value="1"/>
</dbReference>
<dbReference type="FunFam" id="1.10.8.720:FF:000003">
    <property type="entry name" value="Cytoplasmic dynein heavy chain 2"/>
    <property type="match status" value="1"/>
</dbReference>
<dbReference type="FunFam" id="1.20.1270.280:FF:000004">
    <property type="entry name" value="Cytoplasmic dynein heavy chain 2"/>
    <property type="match status" value="1"/>
</dbReference>
<dbReference type="FunFam" id="3.40.50.300:FF:000373">
    <property type="entry name" value="Cytoplasmic dynein heavy chain 2"/>
    <property type="match status" value="1"/>
</dbReference>
<dbReference type="FunFam" id="1.20.58.1120:FF:000013">
    <property type="entry name" value="Dynein heavy chain-like protein"/>
    <property type="match status" value="1"/>
</dbReference>
<dbReference type="Gene3D" id="1.10.287.2620">
    <property type="match status" value="1"/>
</dbReference>
<dbReference type="Gene3D" id="1.10.472.130">
    <property type="match status" value="1"/>
</dbReference>
<dbReference type="Gene3D" id="1.10.8.1220">
    <property type="match status" value="1"/>
</dbReference>
<dbReference type="Gene3D" id="1.10.8.710">
    <property type="match status" value="1"/>
</dbReference>
<dbReference type="Gene3D" id="1.20.1270.280">
    <property type="match status" value="1"/>
</dbReference>
<dbReference type="Gene3D" id="1.20.58.1120">
    <property type="match status" value="1"/>
</dbReference>
<dbReference type="Gene3D" id="1.20.920.20">
    <property type="match status" value="1"/>
</dbReference>
<dbReference type="Gene3D" id="1.20.920.30">
    <property type="match status" value="1"/>
</dbReference>
<dbReference type="Gene3D" id="3.10.490.20">
    <property type="match status" value="1"/>
</dbReference>
<dbReference type="Gene3D" id="6.10.140.1060">
    <property type="match status" value="1"/>
</dbReference>
<dbReference type="Gene3D" id="1.20.140.100">
    <property type="entry name" value="Dynein heavy chain, N-terminal domain 2"/>
    <property type="match status" value="1"/>
</dbReference>
<dbReference type="Gene3D" id="3.20.180.20">
    <property type="entry name" value="Dynein heavy chain, N-terminal domain 2"/>
    <property type="match status" value="1"/>
</dbReference>
<dbReference type="Gene3D" id="3.40.50.300">
    <property type="entry name" value="P-loop containing nucleotide triphosphate hydrolases"/>
    <property type="match status" value="5"/>
</dbReference>
<dbReference type="Gene3D" id="1.10.8.720">
    <property type="entry name" value="Region D6 of dynein motor"/>
    <property type="match status" value="1"/>
</dbReference>
<dbReference type="InterPro" id="IPR003593">
    <property type="entry name" value="AAA+_ATPase"/>
</dbReference>
<dbReference type="InterPro" id="IPR035699">
    <property type="entry name" value="AAA_6"/>
</dbReference>
<dbReference type="InterPro" id="IPR035706">
    <property type="entry name" value="AAA_9"/>
</dbReference>
<dbReference type="InterPro" id="IPR041658">
    <property type="entry name" value="AAA_lid_11"/>
</dbReference>
<dbReference type="InterPro" id="IPR042219">
    <property type="entry name" value="AAA_lid_11_sf"/>
</dbReference>
<dbReference type="InterPro" id="IPR026983">
    <property type="entry name" value="DHC"/>
</dbReference>
<dbReference type="InterPro" id="IPR054354">
    <property type="entry name" value="DYNC2H1-like_lid"/>
</dbReference>
<dbReference type="InterPro" id="IPR042222">
    <property type="entry name" value="Dynein_2_N"/>
</dbReference>
<dbReference type="InterPro" id="IPR043157">
    <property type="entry name" value="Dynein_AAA1S"/>
</dbReference>
<dbReference type="InterPro" id="IPR041466">
    <property type="entry name" value="Dynein_AAA5_ext"/>
</dbReference>
<dbReference type="InterPro" id="IPR041228">
    <property type="entry name" value="Dynein_C"/>
</dbReference>
<dbReference type="InterPro" id="IPR043160">
    <property type="entry name" value="Dynein_C_barrel"/>
</dbReference>
<dbReference type="InterPro" id="IPR024743">
    <property type="entry name" value="Dynein_HC_stalk"/>
</dbReference>
<dbReference type="InterPro" id="IPR024317">
    <property type="entry name" value="Dynein_heavy_chain_D4_dom"/>
</dbReference>
<dbReference type="InterPro" id="IPR004273">
    <property type="entry name" value="Dynein_heavy_D6_P-loop"/>
</dbReference>
<dbReference type="InterPro" id="IPR013602">
    <property type="entry name" value="Dynein_heavy_linker"/>
</dbReference>
<dbReference type="InterPro" id="IPR013594">
    <property type="entry name" value="Dynein_heavy_tail"/>
</dbReference>
<dbReference type="InterPro" id="IPR042228">
    <property type="entry name" value="Dynein_linker_3"/>
</dbReference>
<dbReference type="InterPro" id="IPR027417">
    <property type="entry name" value="P-loop_NTPase"/>
</dbReference>
<dbReference type="PANTHER" id="PTHR46532:SF4">
    <property type="entry name" value="AAA+ ATPASE DOMAIN-CONTAINING PROTEIN"/>
    <property type="match status" value="1"/>
</dbReference>
<dbReference type="PANTHER" id="PTHR46532">
    <property type="entry name" value="MALE FERTILITY FACTOR KL5"/>
    <property type="match status" value="1"/>
</dbReference>
<dbReference type="Pfam" id="PF12774">
    <property type="entry name" value="AAA_6"/>
    <property type="match status" value="1"/>
</dbReference>
<dbReference type="Pfam" id="PF12775">
    <property type="entry name" value="AAA_7"/>
    <property type="match status" value="1"/>
</dbReference>
<dbReference type="Pfam" id="PF12780">
    <property type="entry name" value="AAA_8"/>
    <property type="match status" value="1"/>
</dbReference>
<dbReference type="Pfam" id="PF12781">
    <property type="entry name" value="AAA_9"/>
    <property type="match status" value="1"/>
</dbReference>
<dbReference type="Pfam" id="PF18198">
    <property type="entry name" value="AAA_lid_11"/>
    <property type="match status" value="1"/>
</dbReference>
<dbReference type="Pfam" id="PF08385">
    <property type="entry name" value="DHC_N1"/>
    <property type="match status" value="1"/>
</dbReference>
<dbReference type="Pfam" id="PF08393">
    <property type="entry name" value="DHC_N2"/>
    <property type="match status" value="1"/>
</dbReference>
<dbReference type="Pfam" id="PF22597">
    <property type="entry name" value="DYN_lid"/>
    <property type="match status" value="1"/>
</dbReference>
<dbReference type="Pfam" id="PF17852">
    <property type="entry name" value="Dynein_AAA_lid"/>
    <property type="match status" value="1"/>
</dbReference>
<dbReference type="Pfam" id="PF18199">
    <property type="entry name" value="Dynein_C"/>
    <property type="match status" value="1"/>
</dbReference>
<dbReference type="Pfam" id="PF03028">
    <property type="entry name" value="Dynein_heavy"/>
    <property type="match status" value="1"/>
</dbReference>
<dbReference type="Pfam" id="PF12777">
    <property type="entry name" value="MT"/>
    <property type="match status" value="1"/>
</dbReference>
<dbReference type="SMART" id="SM00382">
    <property type="entry name" value="AAA"/>
    <property type="match status" value="4"/>
</dbReference>
<dbReference type="SUPFAM" id="SSF52540">
    <property type="entry name" value="P-loop containing nucleoside triphosphate hydrolases"/>
    <property type="match status" value="4"/>
</dbReference>
<comment type="function">
    <text evidence="2 4 5 6 8 9 10 11 12">Cytoplasmic dynein acts as a motor for the intracellular retrograde motility of vesicles and organelles along microtubules (By similarity). Dynein has ATPase activity; the force-producing power stroke is thought to occur on release of ADP (By similarity). May play a role in nuclear migration in hypodermal precursor cells (PubMed:20005871, PubMed:27697906). May be involved in the transport of synaptic vesicle components towards the axon of the DA motor neuron (PubMed:20510931). This function may involve the regulation of dynein by pct-1 and/or cdk-5 (PubMed:20510931). Involved in the formation of synapses in the dorsal region during synaptic remodeling of DD motor neurons (PubMed:21609829). Required for anterograde trafficking of dense-core vesicles in the DB motor neuron dendrites (PubMed:22699897). Required for the formation of dendritic branches of PVD sensory neurons (PubMed:21205795). May also play a role in GABAergic synaptic vesicle localization in the ventral nerve cord (PubMed:16996038). May play a role in the pairing of homologous chromosomes during meiosis (PubMed:26483555).</text>
</comment>
<comment type="subunit">
    <text>Consists of at least two heavy chains and a number of intermediate and light chains.</text>
</comment>
<comment type="subcellular location">
    <subcellularLocation>
        <location>Cytoplasm</location>
        <location>Cytoskeleton</location>
    </subcellularLocation>
</comment>
<comment type="domain">
    <text>Dynein heavy chains probably consist of an N-terminal stem (which binds cargo and interacts with other dynein components), and the head or motor domain. The motor contains six tandemly-linked AAA domains in the head, which form a ring. A stalk-like structure (formed by two of the coiled coil domains) protrudes between AAA 4 and AAA 5 and terminates in a microtubule-binding site. A seventh domain may also contribute to this ring; it is not clear whether the N-terminus or the C-terminus forms this extra domain. There are four well-conserved and two non-conserved ATPase sites, one per AAA domain. Probably only one of these (within AAA 1) actually hydrolyzes ATP, the others may serve a regulatory function.</text>
</comment>
<comment type="disruption phenotype">
    <text evidence="4 5 7 13">RNAi-mediated knockdown prevents sperm-donated centrosome from leaving the posterior cortex in 1-cell embryos (PubMed:20599902). RNAi-mediated knockdown results in nuclear migration defects in hyp7 hypodermal precursor cells (PubMed:20005871). RNAi-mediated knockdown in a pam-1 mutant background restores anterior-posterior polarity, par-1, par2 and par-6 asymmetric localization and pseudocleavage formation (PubMed:20599902). RNAi-mediated knockdown results in an abnormal distribution of GABAergic synaptic vesicles at synaptic termini of the ventral nerve cord (PubMed:16996038). RNAi-mediated knockdown in combination with exposure to pentylenetetrazole, a GABA antagonist that induces seizures, results in an increased convulsion incidence as compared to wild-type animals (PubMed:16996038). RNAi-mediated knockdown in a fbf-2 loss of function background results in sterility and the formation of small endomitotic oocytes (PubMed:27864381).</text>
</comment>
<comment type="similarity">
    <text evidence="14">Belongs to the dynein heavy chain family.</text>
</comment>
<name>DYHC_CAEEL</name>
<sequence>MDSGNESSIIQPPNLKTAAEGDVKEYIVQVVTSHFGLSPRDQTTLDVELTAATTFITDFINEADKNVIVVDRVVAREQGDQPAGAESGGEESAPATFQVHDGLFMTDRGQAMMFVKQSNVIEAEKKIATQVSAFPLNGGSAWEQLHFLMSRLLNPYCKSFIGQSGRGERDGDKLAPTVQKCFTEAEAALLHLQQNIDIPEINLVVNQHILDAIEQAGKENRRAKIEDLGDLVEDANFLNALQSGCNRWVKEIRKVTQLERDPSSGTSLQEMTFWLNLERALLKISQKRDGEEVTLTLEALKCGKRFHATVGFDSDNGLKQKLAVVQDYNTLMKEFPLSELVSATDVPKLMHAVVGIFLHLRKLRSTKYPLQRALRLVEAISRDLNSQLLKVLSSYNLMRTPIAEFNEIMSQCQALFSKWDDEYDKFIALLRDINKKKRDDPSKLSWKVTAVHKRLETRLMQILQFRKQHEQFRTVIERVLRPVGNGSREREQLMIDSSEGEKSPDEQVDIAYEFLKNVDFLDVDSPAWENAFKRYEDQIGVVETAITTRLKSQLESSRNSNEMFSIFSRYNALFIRPRIRGAIYEYQTRLINRVKEDINELQARFTKARGEQGVKIMQTVGLPPFSAKIMWIRNYERQLQRYMKRVEDVLGKQWENHVDGRQLKADGDNFKVKLNTQPMFDEWVESVQSQNWTLPNKILTVDRVQVDGRMQLQLKINYHSDSSVLYKEVSHLKSMGFRVPLKIVNWAHQANQMRPSATSLIEAARTFASVNAALASVQGVDSLLASYKKDIQNQLIEGATLGWDSYKVDQYQLKLAETVNTYQERCEELLNVVRIVNADLNVLKSCRYDKETIENLLTSIQKGVDQLSLGNYSNLAQWVNTLDRQIETILARRVEDAIRVWTLVFSQSEEVEELRERQVVLPTVKNVVVDLCMTAQTLYISPSTRETREKILEQLYEWHSVCTAQMRISGKRFQMVMNEEIEPETYHNILNVMPEGQACLEKAYDCVNGIMSDLEEYLSEWLSYQSLWVLQAEQLFEMLGTSLSKWMKTLMEIRKGRLVFDTQDTRKVIFPVSVEYGKAQQKILFKYDYWHKEMLVKFGAVVGDEMQKFFNSVSKWRNVLETQSVDGGSTSDTIGLISFVQSLKKQTKSGQDAVDLYRSSQRLLNQQRYQFPAQWLYSENVEGEWSAFTEILSLRDASIQTQMMNLQTKFAQEDELVEKRTVETLTEWNKSKPVEGAQRPQEALNVITAFEAKLNKLTEERNKMRKARVALDLSDSAHAPSEGDKLTVATEELAAMKDVWKALQPVYTGIDEAKEKTWLSVQPRKIRQSLDELMNQLKQLPVKCRTYKSYEHVKQMLHTYGKMNMLVAELKSEALKERHWHQMMKEMRVNWNLSDLTLGQVWDADILRHEHTIKKILLVAQGEMALEEFLREMREYWQNYEVELVNYQNKTRLIKGWDDLFNKLKEHQNSLSAMKLSPYYKQFEESAQSWDEKLNKINAMFDVWIDVQRRWVYLEGLFSGSAEISTLLPFESSRFATITTDVLALMKKVAASPRILDVVNMQGAQRLLERLADMLAKIQKALGEYLERERSSFPRFYFVGDEDLLEIMGNSKDITRIQKHLKKMFAGITAIDINEEDRSITAFHSREGEKVDLVKIVSTKDVRINDWLQALEAEMKHTLARQLAASLTHFSKMNIQTMTTDDYVEWLDKFPAQVITLTAEIWWCDEMEKTLADGKGAENVEQAVVKTLELLADSVLKEQPPIRRKKMEALITELVHKRDTCRKLVSMKIRAANDFGWLQCMRFYFDPKQVDPVRCCVVKMANSQFFYGFEYLGIQERLVRTPLTDRCYLTMTQALHSRLGGSPFGPAGTGKTESVKALGHQLGRFVLVFNCDETFDFQAMGRILVGLCQVGAWGCFDEFNRLEERMLSAVSQQIQTIQEAVRAGGDMSVDLVGKRLNVNSNIGIFITMNPGYSGRSNLPDNLKQLFRSLAMTQPDRQLIAQVMLFSQGFRTAETLANKIVPLFILCKEQLSDQCHYDFGLRALKYVLVSAGNIKRDKLDKMGSAALEDVAEQQMLIQSVCETLVPKLVNEDIALLFSLLSDVFPGIHYTANQMRELRQQLSTVCDEHLLIYSDVQGEMGSMWLDKVLQLYQITNLNHGLMLVGSSGSGKTMAWKVLLKALERWENVEGVAHVIDAKAMSKDSLYGVMDPNTREWTDGLFTSVIRKIIDNVRGEADRRQWIIFDGDVDPEWVENLNSVLDDNKLLTLPNGERLSIPPNVRIIFEVADLKYATLATVSRCGMVWFSEEVVTSEMLFERYLSIIRRVPLDSDSAISFSSSSAPVNLIGEDAKPTRSIEIQRTAALALQTHFSPDGIVPGSLKYAVSELEHIMPPTPQRLLSSFFSMMSYSIRKIVSHDEGLIDDSVEIDQIQSFVLRSMLTNLVWAFSGDGKWKSREMMSDFIRQATTISLPPNQQACLIDYEVQLSGDWQPWLSKVPTMEIESHRVAAADLVVPTIDTVRHEMLLAAWLAEHKPLVLCGPPGSGKTMTLLAALRSQQEMEVVNVNFSSSTTPELLLRTFDHYCEYRRTPNGVVLAPVQLSQWLVIFCDEINLPAPDKYGTQRVISFLRQLVELNGFYRTSDHSWVSLERIQFVGACNPPTDPGRHPMTSRFLRHVPIVYVDYPGQTSLQQIYGTFNRAMLKMTPAVRGLADQLTNAMVDVYLASQEHFTQDDQPHYVYSPRELTRWVRGISEAITPLESLSAEQLVRLWAHEAIRLFQDRLVTEEEREWTDKLVDTTAERYFGNACRLDEALKRPLLYSCWLSRNYVPVTREELQDYVSARLKGFYEEELDVKLVLFDQMLDHVLRIDRIYRQSQGHLLLIGTAGAGKTTLSRFVAWLNGLSVFQLKVHSKYTAADFDEDMRTVLRRAGCRNEKLCFIMDESNMLDTGFLERLNTLLANGEVPGLFEGDEHTTLMTQIKEGAQRQGLILDSHDELYKWFTQQVMRNLHVVFTMNPSGSGLRERASTSPALFNRCVLNWFGDWSENALYQVGSELTRTMDLDRTDYEGSVRLTPSCELVPSQPTYRDAVVNTLCLVHKTVQKFNEMETKKGHRVMACTPRHFLDFIKQFMSLFHEKRSDLEEEKIHLNIGLNKISETEEQVKELQKSLKLKSNELQEKKEAANLKLKEMLGDQQKAEEEKKFSEQLQKELAEQLKQMAEKKTFVENDLAQVEPAVAEAQTAVQGIKKSQLVEVKSMSSPPVTVKLTLEAICILLGENVGTDWKAIRQVMMKDDFMTRILQFDTELLTPEILKQMEKYIQNPDWEFDKVNRASVACGPMVKWARAQLLYSTMLHKVEPLRNELKRLEQEAAKKTQEGKVVDVRITELEESIGKYKEEYAQLIGQAENIKQDLLSVQEKVNRSTELLSSLRSERDRWSSGSAGFSQQMDSLVGDALLSSAFLAYAGYYDQMLRDEIFHKWFNHVVNAGLHFRHDLARIEYLSTVDDRLQWQLNSLPVDDLCTENAIMLHRFNRYPLIIDPSGQAVEYIMKQFAGKNIQKTSFLDESFRKNLESALRFGNSLLVQDVEAYDPILNPVLNREVKRAGGRVLITIGDQDIDLSPSFQIFMITRDSTVEFSPDICSRVTFVNFTVTSSSLASQCLNQVLRSERPDVDKKRNDLLKLQGEFAVRLRHLEKALLAALNESKGKILDDNSVIETLEKLKNEAAEVAQKSAETDKVMAEVDAVSAQYQRLSTACSHIYHTLQQLNEIHFLYHYSLDFLVEIFTHVLKTPELSSTTDYAKRLRIITTSLFQTVFRRVSRGMLHTDKVLLALLLMRIHIRSNPSAPAYEQHFDLLLGRSDFVAKNDEADSTIPGGLDFLTVENKKSIAKARKVVGFENVFAHLQHNSAAVTSWLTNDNPESNVPVVWDDADGKLSPLCIAMNSLIVVHALRPDRLMASAHRVVSTAFDDHFMQQDKVVDILSIVDNEVSPSEPVLLCSATGYDASGKIEDLAVETNRQLTSIAIGSAEGFNQADSALGTATKSGRWVLLKNVHLAPSWLAQLEKRLHSMKPHAQFRLFLTAEIHPKLPSSILRASRVVVFEPATGLKANLLRSLSSIPPQRLTKAPTERSRLYLLVCWLHALVQERLRYTPLGWSTAYEFSDADLRVACDTLDAAVDAVAQGRPNVEPERLPWTTLRTLLSQCIYGGKIDNQFDQVLLDCVLENLFTAKSFEQDHVLIPKYDGDDSLFTPNMSKKDQMIGWVEELKNEQLPAWLGLPNNAEKVLLTKRGESMLRNMLKVTDEELAFNEDGKEEVKPQWMAQLGELAKQWLQLLPKEIVKMRRTVENIKDPLFRFFEREVNLGSQLLKDIRRDLNEISAVCRAEKKQNNETRALAASLQKGEVPTGWKRYTVPREVTVMDWMTDLNERLKQLIRIGGADNLKRETFWLGGTFSPEAYITATRQQVAQANTWSLEQLNLHIHIGRTDSTDVFRISGIDIRGAKSVGGNKLELCELVKSECDIVEFSWKQDVADGTRLPLYLYGDRRQLISPLAFHLSSATVFYQRGVALVANSTL</sequence>
<gene>
    <name evidence="15" type="primary">dhc-1</name>
    <name evidence="15" type="ORF">T21E12.4</name>
</gene>